<evidence type="ECO:0000255" key="1">
    <source>
        <dbReference type="HAMAP-Rule" id="MF_01015"/>
    </source>
</evidence>
<comment type="subcellular location">
    <subcellularLocation>
        <location evidence="1">Cell membrane</location>
        <topology evidence="1">Multi-pass membrane protein</topology>
    </subcellularLocation>
</comment>
<comment type="similarity">
    <text evidence="1">Belongs to the AAE transporter (TC 2.A.81) family. YbjL subfamily.</text>
</comment>
<protein>
    <recommendedName>
        <fullName evidence="1">Putative transport protein YbjL</fullName>
    </recommendedName>
</protein>
<keyword id="KW-1003">Cell membrane</keyword>
<keyword id="KW-0472">Membrane</keyword>
<keyword id="KW-0677">Repeat</keyword>
<keyword id="KW-0812">Transmembrane</keyword>
<keyword id="KW-1133">Transmembrane helix</keyword>
<keyword id="KW-0813">Transport</keyword>
<organism>
    <name type="scientific">Salmonella choleraesuis (strain SC-B67)</name>
    <dbReference type="NCBI Taxonomy" id="321314"/>
    <lineage>
        <taxon>Bacteria</taxon>
        <taxon>Pseudomonadati</taxon>
        <taxon>Pseudomonadota</taxon>
        <taxon>Gammaproteobacteria</taxon>
        <taxon>Enterobacterales</taxon>
        <taxon>Enterobacteriaceae</taxon>
        <taxon>Salmonella</taxon>
    </lineage>
</organism>
<dbReference type="EMBL" id="AE017220">
    <property type="protein sequence ID" value="AAX64770.1"/>
    <property type="molecule type" value="Genomic_DNA"/>
</dbReference>
<dbReference type="RefSeq" id="WP_001539581.1">
    <property type="nucleotide sequence ID" value="NC_006905.1"/>
</dbReference>
<dbReference type="SMR" id="Q57R91"/>
<dbReference type="KEGG" id="sec:SCH_0864"/>
<dbReference type="HOGENOM" id="CLU_035023_2_2_6"/>
<dbReference type="Proteomes" id="UP000000538">
    <property type="component" value="Chromosome"/>
</dbReference>
<dbReference type="GO" id="GO:0005886">
    <property type="term" value="C:plasma membrane"/>
    <property type="evidence" value="ECO:0007669"/>
    <property type="project" value="UniProtKB-SubCell"/>
</dbReference>
<dbReference type="GO" id="GO:0008324">
    <property type="term" value="F:monoatomic cation transmembrane transporter activity"/>
    <property type="evidence" value="ECO:0007669"/>
    <property type="project" value="InterPro"/>
</dbReference>
<dbReference type="GO" id="GO:0006813">
    <property type="term" value="P:potassium ion transport"/>
    <property type="evidence" value="ECO:0007669"/>
    <property type="project" value="InterPro"/>
</dbReference>
<dbReference type="FunFam" id="3.30.70.1450:FF:000003">
    <property type="entry name" value="Putative transport protein YbjL"/>
    <property type="match status" value="1"/>
</dbReference>
<dbReference type="Gene3D" id="3.30.70.1450">
    <property type="entry name" value="Regulator of K+ conductance, C-terminal domain"/>
    <property type="match status" value="1"/>
</dbReference>
<dbReference type="HAMAP" id="MF_01015">
    <property type="entry name" value="YbjL"/>
    <property type="match status" value="1"/>
</dbReference>
<dbReference type="InterPro" id="IPR050144">
    <property type="entry name" value="AAE_transporter"/>
</dbReference>
<dbReference type="InterPro" id="IPR006037">
    <property type="entry name" value="RCK_C"/>
</dbReference>
<dbReference type="InterPro" id="IPR036721">
    <property type="entry name" value="RCK_C_sf"/>
</dbReference>
<dbReference type="InterPro" id="IPR023017">
    <property type="entry name" value="Transp_YbjL_put"/>
</dbReference>
<dbReference type="InterPro" id="IPR006512">
    <property type="entry name" value="YidE_YbjL"/>
</dbReference>
<dbReference type="NCBIfam" id="NF003440">
    <property type="entry name" value="PRK04972.1"/>
    <property type="match status" value="1"/>
</dbReference>
<dbReference type="NCBIfam" id="TIGR01625">
    <property type="entry name" value="YidE_YbjL_dupl"/>
    <property type="match status" value="2"/>
</dbReference>
<dbReference type="PANTHER" id="PTHR30445">
    <property type="entry name" value="K(+)_H(+) ANTIPORTER SUBUNIT KHTT"/>
    <property type="match status" value="1"/>
</dbReference>
<dbReference type="PANTHER" id="PTHR30445:SF10">
    <property type="entry name" value="TRANSPORT PROTEIN YBJL-RELATED"/>
    <property type="match status" value="1"/>
</dbReference>
<dbReference type="Pfam" id="PF06826">
    <property type="entry name" value="Asp-Al_Ex"/>
    <property type="match status" value="2"/>
</dbReference>
<dbReference type="Pfam" id="PF02080">
    <property type="entry name" value="TrkA_C"/>
    <property type="match status" value="2"/>
</dbReference>
<dbReference type="SUPFAM" id="SSF116726">
    <property type="entry name" value="TrkA C-terminal domain-like"/>
    <property type="match status" value="2"/>
</dbReference>
<dbReference type="PROSITE" id="PS51202">
    <property type="entry name" value="RCK_C"/>
    <property type="match status" value="2"/>
</dbReference>
<accession>Q57R91</accession>
<sequence length="561" mass="60306">MNINISDLLNGNYILLLFVVLALGLCLGKLRLGSVQLGNSIGVLVVSLLLGQQHFSINTDALNLGFMLFIFCVGVEAGPNFFSIFFRDGKNYLMLALVMVGSALLIALGLGKLFGWDIGLTAGMLAGSMTSTPVLVGAGDTLRHSGIASPQLSSALDNLSLGYALTYLIGLVSLIVGARYLPKLQHQDLQTSAQQIARERGLDTDANRKVYLPVIRAYRVGPELVAWTDGKNLRELGIYRQTGCYIERIRRNGILANPDGDAVLQMGDEIALVGYPDAHARLDPSFRNGKEVFDRDLLDMRIVTEEIVVKNHNAVGRRLAQLKLTDHGCFLNRVIRSQIEMPIDDNVVLNKGDVLQVSGDARRVKTIADRIGFISIHSQVTDLLAFCAFFIIGLMIGMITFQFSNFSFGIGNAAGLLFAGIMLGFLRANHPTFGYIPQGALNMVKEFGLMVFMAGVGLSAGSGINNGLGAVGGQMLIAGLVVSLVPVVICFLFGAYVLRMNRALLFGAMMGARTCAPAMEIISDTARSNIPALGYAGTYAIANVLLTLAGTLIVIIWPELG</sequence>
<proteinExistence type="inferred from homology"/>
<reference key="1">
    <citation type="journal article" date="2005" name="Nucleic Acids Res.">
        <title>The genome sequence of Salmonella enterica serovar Choleraesuis, a highly invasive and resistant zoonotic pathogen.</title>
        <authorList>
            <person name="Chiu C.-H."/>
            <person name="Tang P."/>
            <person name="Chu C."/>
            <person name="Hu S."/>
            <person name="Bao Q."/>
            <person name="Yu J."/>
            <person name="Chou Y.-Y."/>
            <person name="Wang H.-S."/>
            <person name="Lee Y.-S."/>
        </authorList>
    </citation>
    <scope>NUCLEOTIDE SEQUENCE [LARGE SCALE GENOMIC DNA]</scope>
    <source>
        <strain>SC-B67</strain>
    </source>
</reference>
<name>YBJL_SALCH</name>
<gene>
    <name evidence="1" type="primary">ybjL</name>
    <name type="ordered locus">SCH_0864</name>
</gene>
<feature type="chain" id="PRO_0000226886" description="Putative transport protein YbjL">
    <location>
        <begin position="1"/>
        <end position="561"/>
    </location>
</feature>
<feature type="transmembrane region" description="Helical" evidence="1">
    <location>
        <begin position="8"/>
        <end position="28"/>
    </location>
</feature>
<feature type="transmembrane region" description="Helical" evidence="1">
    <location>
        <begin position="32"/>
        <end position="52"/>
    </location>
</feature>
<feature type="transmembrane region" description="Helical" evidence="1">
    <location>
        <begin position="66"/>
        <end position="86"/>
    </location>
</feature>
<feature type="transmembrane region" description="Helical" evidence="1">
    <location>
        <begin position="94"/>
        <end position="114"/>
    </location>
</feature>
<feature type="transmembrane region" description="Helical" evidence="1">
    <location>
        <begin position="158"/>
        <end position="178"/>
    </location>
</feature>
<feature type="transmembrane region" description="Helical" evidence="1">
    <location>
        <begin position="383"/>
        <end position="403"/>
    </location>
</feature>
<feature type="transmembrane region" description="Helical" evidence="1">
    <location>
        <begin position="406"/>
        <end position="426"/>
    </location>
</feature>
<feature type="transmembrane region" description="Helical" evidence="1">
    <location>
        <begin position="447"/>
        <end position="467"/>
    </location>
</feature>
<feature type="transmembrane region" description="Helical" evidence="1">
    <location>
        <begin position="475"/>
        <end position="495"/>
    </location>
</feature>
<feature type="transmembrane region" description="Helical" evidence="1">
    <location>
        <begin position="537"/>
        <end position="557"/>
    </location>
</feature>
<feature type="domain" description="RCK C-terminal 1" evidence="1">
    <location>
        <begin position="200"/>
        <end position="288"/>
    </location>
</feature>
<feature type="domain" description="RCK C-terminal 2" evidence="1">
    <location>
        <begin position="292"/>
        <end position="373"/>
    </location>
</feature>